<dbReference type="EMBL" id="L77117">
    <property type="protein sequence ID" value="AAB99378.1"/>
    <property type="molecule type" value="Genomic_DNA"/>
</dbReference>
<dbReference type="PIR" id="G64469">
    <property type="entry name" value="G64469"/>
</dbReference>
<dbReference type="STRING" id="243232.MJ_1360"/>
<dbReference type="PaxDb" id="243232-MJ_1360"/>
<dbReference type="EnsemblBacteria" id="AAB99378">
    <property type="protein sequence ID" value="AAB99378"/>
    <property type="gene ID" value="MJ_1360"/>
</dbReference>
<dbReference type="KEGG" id="mja:MJ_1360"/>
<dbReference type="eggNOG" id="arCOG05080">
    <property type="taxonomic scope" value="Archaea"/>
</dbReference>
<dbReference type="HOGENOM" id="CLU_2392941_0_0_2"/>
<dbReference type="InParanoid" id="Q58755"/>
<dbReference type="Proteomes" id="UP000000805">
    <property type="component" value="Chromosome"/>
</dbReference>
<protein>
    <recommendedName>
        <fullName>Uncharacterized protein MJ1360</fullName>
    </recommendedName>
</protein>
<reference key="1">
    <citation type="journal article" date="1996" name="Science">
        <title>Complete genome sequence of the methanogenic archaeon, Methanococcus jannaschii.</title>
        <authorList>
            <person name="Bult C.J."/>
            <person name="White O."/>
            <person name="Olsen G.J."/>
            <person name="Zhou L."/>
            <person name="Fleischmann R.D."/>
            <person name="Sutton G.G."/>
            <person name="Blake J.A."/>
            <person name="FitzGerald L.M."/>
            <person name="Clayton R.A."/>
            <person name="Gocayne J.D."/>
            <person name="Kerlavage A.R."/>
            <person name="Dougherty B.A."/>
            <person name="Tomb J.-F."/>
            <person name="Adams M.D."/>
            <person name="Reich C.I."/>
            <person name="Overbeek R."/>
            <person name="Kirkness E.F."/>
            <person name="Weinstock K.G."/>
            <person name="Merrick J.M."/>
            <person name="Glodek A."/>
            <person name="Scott J.L."/>
            <person name="Geoghagen N.S.M."/>
            <person name="Weidman J.F."/>
            <person name="Fuhrmann J.L."/>
            <person name="Nguyen D."/>
            <person name="Utterback T.R."/>
            <person name="Kelley J.M."/>
            <person name="Peterson J.D."/>
            <person name="Sadow P.W."/>
            <person name="Hanna M.C."/>
            <person name="Cotton M.D."/>
            <person name="Roberts K.M."/>
            <person name="Hurst M.A."/>
            <person name="Kaine B.P."/>
            <person name="Borodovsky M."/>
            <person name="Klenk H.-P."/>
            <person name="Fraser C.M."/>
            <person name="Smith H.O."/>
            <person name="Woese C.R."/>
            <person name="Venter J.C."/>
        </authorList>
    </citation>
    <scope>NUCLEOTIDE SEQUENCE [LARGE SCALE GENOMIC DNA]</scope>
    <source>
        <strain>ATCC 43067 / DSM 2661 / JAL-1 / JCM 10045 / NBRC 100440</strain>
    </source>
</reference>
<gene>
    <name type="ordered locus">MJ1360</name>
</gene>
<sequence>MWGSMPRRKIDKLYVKIYFEGNAIEGEYDFDAVTHLKNGILKYLWTGKKDPIIIWNMDNKSFTIIDPSKICAVEVQGSLMFLDDIPEKKLEMKSFSERD</sequence>
<accession>Q58755</accession>
<organism>
    <name type="scientific">Methanocaldococcus jannaschii (strain ATCC 43067 / DSM 2661 / JAL-1 / JCM 10045 / NBRC 100440)</name>
    <name type="common">Methanococcus jannaschii</name>
    <dbReference type="NCBI Taxonomy" id="243232"/>
    <lineage>
        <taxon>Archaea</taxon>
        <taxon>Methanobacteriati</taxon>
        <taxon>Methanobacteriota</taxon>
        <taxon>Methanomada group</taxon>
        <taxon>Methanococci</taxon>
        <taxon>Methanococcales</taxon>
        <taxon>Methanocaldococcaceae</taxon>
        <taxon>Methanocaldococcus</taxon>
    </lineage>
</organism>
<proteinExistence type="predicted"/>
<name>Y1360_METJA</name>
<feature type="chain" id="PRO_0000107297" description="Uncharacterized protein MJ1360">
    <location>
        <begin position="1"/>
        <end position="99"/>
    </location>
</feature>
<keyword id="KW-1185">Reference proteome</keyword>